<name>MK3_PALPR</name>
<protein>
    <recommendedName>
        <fullName>Metalnikowin-3</fullName>
    </recommendedName>
    <alternativeName>
        <fullName>Metalnikowin III</fullName>
    </alternativeName>
</protein>
<proteinExistence type="evidence at protein level"/>
<feature type="peptide" id="PRO_0000044163" description="Metalnikowin-3">
    <location>
        <begin position="1"/>
        <end position="16"/>
    </location>
</feature>
<evidence type="ECO:0000269" key="1">
    <source ref="1"/>
</evidence>
<organism>
    <name type="scientific">Palomena prasina</name>
    <name type="common">Green shield bug</name>
    <name type="synonym">Cimex prasinus</name>
    <dbReference type="NCBI Taxonomy" id="55431"/>
    <lineage>
        <taxon>Eukaryota</taxon>
        <taxon>Metazoa</taxon>
        <taxon>Ecdysozoa</taxon>
        <taxon>Arthropoda</taxon>
        <taxon>Hexapoda</taxon>
        <taxon>Insecta</taxon>
        <taxon>Pterygota</taxon>
        <taxon>Neoptera</taxon>
        <taxon>Paraneoptera</taxon>
        <taxon>Hemiptera</taxon>
        <taxon>Heteroptera</taxon>
        <taxon>Panheteroptera</taxon>
        <taxon>Pentatomomorpha</taxon>
        <taxon>Pentatomoidea</taxon>
        <taxon>Pentatomidae</taxon>
        <taxon>Pentatominae</taxon>
        <taxon>Palomena</taxon>
    </lineage>
</organism>
<keyword id="KW-0044">Antibiotic</keyword>
<keyword id="KW-0929">Antimicrobial</keyword>
<keyword id="KW-0903">Direct protein sequencing</keyword>
<keyword id="KW-0391">Immunity</keyword>
<keyword id="KW-0399">Innate immunity</keyword>
<accession>P80411</accession>
<reference key="1">
    <citation type="journal article" date="1996" name="J. Insect Physiol.">
        <title>The inducible antibacterial peptides of the hemipteran insect Palomena prasina: identification of a unique family of proline-rich peptides and of a novel insect defensin.</title>
        <authorList>
            <person name="Chernysh S."/>
            <person name="Cociancich S."/>
            <person name="Briand J.-P."/>
            <person name="Hetru C."/>
            <person name="Bulet P."/>
        </authorList>
    </citation>
    <scope>PROTEIN SEQUENCE</scope>
    <scope>FUNCTION</scope>
    <scope>INDUCTION</scope>
    <scope>MASS SPECTROMETRY</scope>
    <source>
        <tissue>Hemolymph</tissue>
        <tissue>Larval hemolymph</tissue>
    </source>
</reference>
<sequence length="16" mass="2024">VDKPDYRPRPWPRPNM</sequence>
<comment type="function">
    <text evidence="1">Antibacterial peptide active against Gram-negative bacteria.</text>
</comment>
<comment type="induction">
    <text evidence="1">By bacterial infection.</text>
</comment>
<comment type="mass spectrometry" mass="2024.5" error="0.3" method="Electrospray" evidence="1"/>
<dbReference type="GO" id="GO:0005576">
    <property type="term" value="C:extracellular region"/>
    <property type="evidence" value="ECO:0000314"/>
    <property type="project" value="UniProtKB"/>
</dbReference>
<dbReference type="GO" id="GO:0050829">
    <property type="term" value="P:defense response to Gram-negative bacterium"/>
    <property type="evidence" value="ECO:0000270"/>
    <property type="project" value="UniProtKB"/>
</dbReference>
<dbReference type="GO" id="GO:0045087">
    <property type="term" value="P:innate immune response"/>
    <property type="evidence" value="ECO:0007669"/>
    <property type="project" value="UniProtKB-KW"/>
</dbReference>